<name>SOMA_PANPG</name>
<organism>
    <name type="scientific">Pangasius pangasius</name>
    <name type="common">Yellowtail catfish</name>
    <name type="synonym">Pimelodus pangasius</name>
    <dbReference type="NCBI Taxonomy" id="8001"/>
    <lineage>
        <taxon>Eukaryota</taxon>
        <taxon>Metazoa</taxon>
        <taxon>Chordata</taxon>
        <taxon>Craniata</taxon>
        <taxon>Vertebrata</taxon>
        <taxon>Euteleostomi</taxon>
        <taxon>Actinopterygii</taxon>
        <taxon>Neopterygii</taxon>
        <taxon>Teleostei</taxon>
        <taxon>Ostariophysi</taxon>
        <taxon>Siluriformes</taxon>
        <taxon>Pangasiidae</taxon>
        <taxon>Pangasius</taxon>
    </lineage>
</organism>
<protein>
    <recommendedName>
        <fullName>Somatotropin</fullName>
    </recommendedName>
    <alternativeName>
        <fullName>Growth hormone</fullName>
    </alternativeName>
</protein>
<dbReference type="EMBL" id="M63713">
    <property type="protein sequence ID" value="AAA49464.1"/>
    <property type="molecule type" value="mRNA"/>
</dbReference>
<dbReference type="SMR" id="P69161"/>
<dbReference type="GO" id="GO:0005615">
    <property type="term" value="C:extracellular space"/>
    <property type="evidence" value="ECO:0000250"/>
    <property type="project" value="UniProtKB"/>
</dbReference>
<dbReference type="GO" id="GO:0070186">
    <property type="term" value="F:growth hormone activity"/>
    <property type="evidence" value="ECO:0007669"/>
    <property type="project" value="TreeGrafter"/>
</dbReference>
<dbReference type="GO" id="GO:0005131">
    <property type="term" value="F:growth hormone receptor binding"/>
    <property type="evidence" value="ECO:0007669"/>
    <property type="project" value="InterPro"/>
</dbReference>
<dbReference type="GO" id="GO:0046872">
    <property type="term" value="F:metal ion binding"/>
    <property type="evidence" value="ECO:0007669"/>
    <property type="project" value="UniProtKB-KW"/>
</dbReference>
<dbReference type="GO" id="GO:0048513">
    <property type="term" value="P:animal organ development"/>
    <property type="evidence" value="ECO:0007669"/>
    <property type="project" value="TreeGrafter"/>
</dbReference>
<dbReference type="GO" id="GO:0060396">
    <property type="term" value="P:growth hormone receptor signaling pathway"/>
    <property type="evidence" value="ECO:0007669"/>
    <property type="project" value="TreeGrafter"/>
</dbReference>
<dbReference type="GO" id="GO:0042538">
    <property type="term" value="P:hyperosmotic salinity response"/>
    <property type="evidence" value="ECO:0000250"/>
    <property type="project" value="UniProtKB"/>
</dbReference>
<dbReference type="GO" id="GO:0045927">
    <property type="term" value="P:positive regulation of growth"/>
    <property type="evidence" value="ECO:0007669"/>
    <property type="project" value="TreeGrafter"/>
</dbReference>
<dbReference type="GO" id="GO:0046427">
    <property type="term" value="P:positive regulation of receptor signaling pathway via JAK-STAT"/>
    <property type="evidence" value="ECO:0007669"/>
    <property type="project" value="TreeGrafter"/>
</dbReference>
<dbReference type="GO" id="GO:1903576">
    <property type="term" value="P:response to L-arginine"/>
    <property type="evidence" value="ECO:0000250"/>
    <property type="project" value="UniProtKB"/>
</dbReference>
<dbReference type="GO" id="GO:0043434">
    <property type="term" value="P:response to peptide hormone"/>
    <property type="evidence" value="ECO:0000250"/>
    <property type="project" value="UniProtKB"/>
</dbReference>
<dbReference type="GO" id="GO:0042594">
    <property type="term" value="P:response to starvation"/>
    <property type="evidence" value="ECO:0000250"/>
    <property type="project" value="UniProtKB"/>
</dbReference>
<dbReference type="CDD" id="cd10285">
    <property type="entry name" value="somatotropin_like"/>
    <property type="match status" value="1"/>
</dbReference>
<dbReference type="FunFam" id="1.20.1250.10:FF:000009">
    <property type="entry name" value="Growth hormone"/>
    <property type="match status" value="1"/>
</dbReference>
<dbReference type="Gene3D" id="1.20.1250.10">
    <property type="match status" value="1"/>
</dbReference>
<dbReference type="InterPro" id="IPR009079">
    <property type="entry name" value="4_helix_cytokine-like_core"/>
</dbReference>
<dbReference type="InterPro" id="IPR034975">
    <property type="entry name" value="Somatotropin"/>
</dbReference>
<dbReference type="InterPro" id="IPR001400">
    <property type="entry name" value="Somatotropin/Prolactin"/>
</dbReference>
<dbReference type="InterPro" id="IPR018116">
    <property type="entry name" value="Somatotropin_CS"/>
</dbReference>
<dbReference type="PANTHER" id="PTHR11417:SF2">
    <property type="entry name" value="SOMATOTROPIN"/>
    <property type="match status" value="1"/>
</dbReference>
<dbReference type="PANTHER" id="PTHR11417">
    <property type="entry name" value="SOMATOTROPIN,PROLACTIN"/>
    <property type="match status" value="1"/>
</dbReference>
<dbReference type="Pfam" id="PF00103">
    <property type="entry name" value="Hormone_1"/>
    <property type="match status" value="1"/>
</dbReference>
<dbReference type="PRINTS" id="PR00836">
    <property type="entry name" value="SOMATOTROPIN"/>
</dbReference>
<dbReference type="SUPFAM" id="SSF47266">
    <property type="entry name" value="4-helical cytokines"/>
    <property type="match status" value="1"/>
</dbReference>
<dbReference type="PROSITE" id="PS00266">
    <property type="entry name" value="SOMATOTROPIN_1"/>
    <property type="match status" value="1"/>
</dbReference>
<dbReference type="PROSITE" id="PS00338">
    <property type="entry name" value="SOMATOTROPIN_2"/>
    <property type="match status" value="1"/>
</dbReference>
<comment type="function">
    <text>Growth hormone plays an important role in growth control and is involved in the regulation of several anabolic processes. Implicated as an osmoregulatory substance important for seawater adaptation.</text>
</comment>
<comment type="subcellular location">
    <subcellularLocation>
        <location>Secreted</location>
    </subcellularLocation>
</comment>
<comment type="similarity">
    <text evidence="3">Belongs to the somatotropin/prolactin family.</text>
</comment>
<evidence type="ECO:0000250" key="1"/>
<evidence type="ECO:0000269" key="2">
    <source ref="1"/>
</evidence>
<evidence type="ECO:0000305" key="3"/>
<proteinExistence type="evidence at transcript level"/>
<accession>P69161</accession>
<accession>P29970</accession>
<gene>
    <name type="primary">gh</name>
</gene>
<feature type="signal peptide" evidence="1">
    <location>
        <begin position="1"/>
        <end position="22"/>
    </location>
</feature>
<feature type="chain" id="PRO_0000033046" description="Somatotropin">
    <location>
        <begin position="23"/>
        <end position="200"/>
    </location>
</feature>
<feature type="binding site" evidence="1">
    <location>
        <position position="38"/>
    </location>
    <ligand>
        <name>Zn(2+)</name>
        <dbReference type="ChEBI" id="CHEBI:29105"/>
    </ligand>
</feature>
<feature type="binding site" evidence="1">
    <location>
        <position position="182"/>
    </location>
    <ligand>
        <name>Zn(2+)</name>
        <dbReference type="ChEBI" id="CHEBI:29105"/>
    </ligand>
</feature>
<feature type="disulfide bond" evidence="1">
    <location>
        <begin position="71"/>
        <end position="173"/>
    </location>
</feature>
<feature type="disulfide bond" evidence="1">
    <location>
        <begin position="190"/>
        <end position="198"/>
    </location>
</feature>
<feature type="sequence variant" evidence="2">
    <original>Y</original>
    <variation>C</variation>
    <location>
        <position position="98"/>
    </location>
</feature>
<feature type="sequence variant" evidence="2">
    <original>K</original>
    <variation>R</variation>
    <location>
        <position position="175"/>
    </location>
</feature>
<sequence>MARVLVVLSVVVASLFFSQGATFENQRLFNNAVIRVQHLHQLAAKMMDDFEEALLPEERKQLSKIFPLSFCNSDSIEAPAGKDETQKSSVLKLLHTSYRLIESWEFPSKNLGNPNHISEKLADLKMGIGVLIEGCLDGQTSLDENDSLAPPFEDFYQTLSEGNLRKSFRLLSCFKKDMHKVETYLSVAKCRRSLDSNCTL</sequence>
<reference key="1">
    <citation type="submission" date="1992-02" db="EMBL/GenBank/DDBJ databases">
        <title>Molecular cloning and DNA sequencing of growth hormone gene of the fish, Pangasius pangasius.</title>
        <authorList>
            <person name="Lemaire C."/>
            <person name="Panyim S."/>
        </authorList>
    </citation>
    <scope>NUCLEOTIDE SEQUENCE [MRNA]</scope>
    <scope>VARIANTS CYS-98 AND ARG-175</scope>
</reference>
<keyword id="KW-1015">Disulfide bond</keyword>
<keyword id="KW-0372">Hormone</keyword>
<keyword id="KW-0479">Metal-binding</keyword>
<keyword id="KW-0964">Secreted</keyword>
<keyword id="KW-0732">Signal</keyword>
<keyword id="KW-0862">Zinc</keyword>